<accession>F4HSD4</accession>
<accession>Q9LNY4</accession>
<accession>Q9LQN5</accession>
<comment type="function">
    <text evidence="1">May bind GTP and have GTPase activity.</text>
</comment>
<comment type="subcellular location">
    <subcellularLocation>
        <location evidence="6">Mitochondrion</location>
    </subcellularLocation>
</comment>
<comment type="similarity">
    <text evidence="3">Belongs to the TRAFAC class OBG-HflX-like GTPase superfamily. OBG GTPase family.</text>
</comment>
<comment type="sequence caution" evidence="6">
    <conflict type="erroneous gene model prediction">
        <sequence resource="EMBL-CDS" id="AAF75096"/>
    </conflict>
    <text>The predicted gene At1g07620 has been split into 2 genes: At1g07615 and At1g07620.</text>
</comment>
<comment type="sequence caution" evidence="6">
    <conflict type="erroneous gene model prediction">
        <sequence resource="EMBL-CDS" id="AAF79543"/>
    </conflict>
</comment>
<keyword id="KW-0342">GTP-binding</keyword>
<keyword id="KW-0496">Mitochondrion</keyword>
<keyword id="KW-0547">Nucleotide-binding</keyword>
<keyword id="KW-1185">Reference proteome</keyword>
<keyword id="KW-0809">Transit peptide</keyword>
<protein>
    <recommendedName>
        <fullName>Probable GTP-binding protein OBGM, mitochondrial</fullName>
    </recommendedName>
</protein>
<proteinExistence type="evidence at transcript level"/>
<reference key="1">
    <citation type="journal article" date="2000" name="Nature">
        <title>Sequence and analysis of chromosome 1 of the plant Arabidopsis thaliana.</title>
        <authorList>
            <person name="Theologis A."/>
            <person name="Ecker J.R."/>
            <person name="Palm C.J."/>
            <person name="Federspiel N.A."/>
            <person name="Kaul S."/>
            <person name="White O."/>
            <person name="Alonso J."/>
            <person name="Altafi H."/>
            <person name="Araujo R."/>
            <person name="Bowman C.L."/>
            <person name="Brooks S.Y."/>
            <person name="Buehler E."/>
            <person name="Chan A."/>
            <person name="Chao Q."/>
            <person name="Chen H."/>
            <person name="Cheuk R.F."/>
            <person name="Chin C.W."/>
            <person name="Chung M.K."/>
            <person name="Conn L."/>
            <person name="Conway A.B."/>
            <person name="Conway A.R."/>
            <person name="Creasy T.H."/>
            <person name="Dewar K."/>
            <person name="Dunn P."/>
            <person name="Etgu P."/>
            <person name="Feldblyum T.V."/>
            <person name="Feng J.-D."/>
            <person name="Fong B."/>
            <person name="Fujii C.Y."/>
            <person name="Gill J.E."/>
            <person name="Goldsmith A.D."/>
            <person name="Haas B."/>
            <person name="Hansen N.F."/>
            <person name="Hughes B."/>
            <person name="Huizar L."/>
            <person name="Hunter J.L."/>
            <person name="Jenkins J."/>
            <person name="Johnson-Hopson C."/>
            <person name="Khan S."/>
            <person name="Khaykin E."/>
            <person name="Kim C.J."/>
            <person name="Koo H.L."/>
            <person name="Kremenetskaia I."/>
            <person name="Kurtz D.B."/>
            <person name="Kwan A."/>
            <person name="Lam B."/>
            <person name="Langin-Hooper S."/>
            <person name="Lee A."/>
            <person name="Lee J.M."/>
            <person name="Lenz C.A."/>
            <person name="Li J.H."/>
            <person name="Li Y.-P."/>
            <person name="Lin X."/>
            <person name="Liu S.X."/>
            <person name="Liu Z.A."/>
            <person name="Luros J.S."/>
            <person name="Maiti R."/>
            <person name="Marziali A."/>
            <person name="Militscher J."/>
            <person name="Miranda M."/>
            <person name="Nguyen M."/>
            <person name="Nierman W.C."/>
            <person name="Osborne B.I."/>
            <person name="Pai G."/>
            <person name="Peterson J."/>
            <person name="Pham P.K."/>
            <person name="Rizzo M."/>
            <person name="Rooney T."/>
            <person name="Rowley D."/>
            <person name="Sakano H."/>
            <person name="Salzberg S.L."/>
            <person name="Schwartz J.R."/>
            <person name="Shinn P."/>
            <person name="Southwick A.M."/>
            <person name="Sun H."/>
            <person name="Tallon L.J."/>
            <person name="Tambunga G."/>
            <person name="Toriumi M.J."/>
            <person name="Town C.D."/>
            <person name="Utterback T."/>
            <person name="Van Aken S."/>
            <person name="Vaysberg M."/>
            <person name="Vysotskaia V.S."/>
            <person name="Walker M."/>
            <person name="Wu D."/>
            <person name="Yu G."/>
            <person name="Fraser C.M."/>
            <person name="Venter J.C."/>
            <person name="Davis R.W."/>
        </authorList>
    </citation>
    <scope>NUCLEOTIDE SEQUENCE [LARGE SCALE GENOMIC DNA]</scope>
    <source>
        <strain>cv. Columbia</strain>
    </source>
</reference>
<reference key="2">
    <citation type="journal article" date="2017" name="Plant J.">
        <title>Araport11: a complete reannotation of the Arabidopsis thaliana reference genome.</title>
        <authorList>
            <person name="Cheng C.Y."/>
            <person name="Krishnakumar V."/>
            <person name="Chan A.P."/>
            <person name="Thibaud-Nissen F."/>
            <person name="Schobel S."/>
            <person name="Town C.D."/>
        </authorList>
    </citation>
    <scope>GENOME REANNOTATION</scope>
    <source>
        <strain>cv. Columbia</strain>
    </source>
</reference>
<reference key="3">
    <citation type="journal article" date="2004" name="Genome Res.">
        <title>Whole genome sequence comparisons and 'full-length' cDNA sequences: a combined approach to evaluate and improve Arabidopsis genome annotation.</title>
        <authorList>
            <person name="Castelli V."/>
            <person name="Aury J.-M."/>
            <person name="Jaillon O."/>
            <person name="Wincker P."/>
            <person name="Clepet C."/>
            <person name="Menard M."/>
            <person name="Cruaud C."/>
            <person name="Quetier F."/>
            <person name="Scarpelli C."/>
            <person name="Schaechter V."/>
            <person name="Temple G."/>
            <person name="Caboche M."/>
            <person name="Weissenbach J."/>
            <person name="Salanoubat M."/>
        </authorList>
    </citation>
    <scope>NUCLEOTIDE SEQUENCE [LARGE SCALE MRNA]</scope>
    <source>
        <strain>cv. Columbia</strain>
    </source>
</reference>
<sequence length="493" mass="54300">MWLIRAIVPVRYLGSYKRPQKPPWMRNPVVFYSDFSEKKGKVAPLQETRMRDRFTLYARGGEGGSGCSSVRRSRADRYGKPDGGNGGRGGDVILECTHAVWDFSGLQPHIKGGKAGHGTSKNRIGNRGEDKVLLVPIGTVIHLQEGEIPSQVENESPKDLDPWDLPGSLVEDPASEENSDVHQETMSESDQDDTEQESLTRQLGMPKEADFEDDDEEIDQIRYNVAELTQQGQRVIIARGGEGGLGNVSATRYVRGSKFAKSTIRQTNLRSMEDDAEEDDERSSIKAGLLGSEAVLILELKSIADVGLVGMPNAGKSTLLGALSRAKPRVGHYAFTTLRPNLGNVNYDDFSMTVADIPGLIKGAHQNRGLGHNFLRHIERTKVLAYVVDLASGLDGCEGLTPWQQLRDLVMELEFHEEGLSDRSSLIVANKIDEEGAEERLKELKRRVKGVKIFPVCAVLEEGVAELKDGLKMLVDGNGEPSERLKLENICVD</sequence>
<organism>
    <name type="scientific">Arabidopsis thaliana</name>
    <name type="common">Mouse-ear cress</name>
    <dbReference type="NCBI Taxonomy" id="3702"/>
    <lineage>
        <taxon>Eukaryota</taxon>
        <taxon>Viridiplantae</taxon>
        <taxon>Streptophyta</taxon>
        <taxon>Embryophyta</taxon>
        <taxon>Tracheophyta</taxon>
        <taxon>Spermatophyta</taxon>
        <taxon>Magnoliopsida</taxon>
        <taxon>eudicotyledons</taxon>
        <taxon>Gunneridae</taxon>
        <taxon>Pentapetalae</taxon>
        <taxon>rosids</taxon>
        <taxon>malvids</taxon>
        <taxon>Brassicales</taxon>
        <taxon>Brassicaceae</taxon>
        <taxon>Camelineae</taxon>
        <taxon>Arabidopsis</taxon>
    </lineage>
</organism>
<feature type="transit peptide" description="Mitochondrion" evidence="2">
    <location>
        <begin position="1"/>
        <end position="28"/>
    </location>
</feature>
<feature type="chain" id="PRO_0000424831" description="Probable GTP-binding protein OBGM, mitochondrial">
    <location>
        <begin position="29"/>
        <end position="493"/>
    </location>
</feature>
<feature type="domain" description="Obg" evidence="4">
    <location>
        <begin position="48"/>
        <end position="303"/>
    </location>
</feature>
<feature type="domain" description="OBG-type G" evidence="3">
    <location>
        <begin position="304"/>
        <end position="476"/>
    </location>
</feature>
<feature type="region of interest" description="Disordered" evidence="5">
    <location>
        <begin position="65"/>
        <end position="89"/>
    </location>
</feature>
<feature type="region of interest" description="Disordered" evidence="5">
    <location>
        <begin position="146"/>
        <end position="215"/>
    </location>
</feature>
<feature type="compositionally biased region" description="Acidic residues" evidence="5">
    <location>
        <begin position="187"/>
        <end position="196"/>
    </location>
</feature>
<feature type="binding site" evidence="3">
    <location>
        <begin position="310"/>
        <end position="317"/>
    </location>
    <ligand>
        <name>GTP</name>
        <dbReference type="ChEBI" id="CHEBI:37565"/>
    </ligand>
</feature>
<feature type="binding site" evidence="3">
    <location>
        <begin position="356"/>
        <end position="360"/>
    </location>
    <ligand>
        <name>GTP</name>
        <dbReference type="ChEBI" id="CHEBI:37565"/>
    </ligand>
</feature>
<feature type="sequence conflict" description="In Ref. 3; BX816302." evidence="6" ref="3">
    <original>D</original>
    <variation>Y</variation>
    <location>
        <position position="219"/>
    </location>
</feature>
<feature type="sequence conflict" description="In Ref. 3; BX816302." evidence="6" ref="3">
    <original>S</original>
    <variation>R</variation>
    <location>
        <position position="317"/>
    </location>
</feature>
<feature type="sequence conflict" description="In Ref. 3; BX816302." evidence="6" ref="3">
    <original>T</original>
    <variation>K</variation>
    <location>
        <position position="337"/>
    </location>
</feature>
<gene>
    <name type="primary">ATOBGM</name>
    <name type="ordered locus">At1g07615</name>
    <name type="ORF">F22G5.1</name>
    <name type="ORF">F24B9.32</name>
</gene>
<name>OBGM_ARATH</name>
<dbReference type="EMBL" id="AC007583">
    <property type="protein sequence ID" value="AAF75096.1"/>
    <property type="status" value="ALT_SEQ"/>
    <property type="molecule type" value="Genomic_DNA"/>
</dbReference>
<dbReference type="EMBL" id="AC022464">
    <property type="protein sequence ID" value="AAF79543.1"/>
    <property type="status" value="ALT_SEQ"/>
    <property type="molecule type" value="Genomic_DNA"/>
</dbReference>
<dbReference type="EMBL" id="CP002684">
    <property type="protein sequence ID" value="AEE28149.1"/>
    <property type="molecule type" value="Genomic_DNA"/>
</dbReference>
<dbReference type="EMBL" id="BX816302">
    <property type="status" value="NOT_ANNOTATED_CDS"/>
    <property type="molecule type" value="mRNA"/>
</dbReference>
<dbReference type="PIR" id="F86210">
    <property type="entry name" value="F86210"/>
</dbReference>
<dbReference type="RefSeq" id="NP_001077476.1">
    <property type="nucleotide sequence ID" value="NM_001084007.2"/>
</dbReference>
<dbReference type="SMR" id="F4HSD4"/>
<dbReference type="FunCoup" id="F4HSD4">
    <property type="interactions" value="1523"/>
</dbReference>
<dbReference type="STRING" id="3702.F4HSD4"/>
<dbReference type="iPTMnet" id="F4HSD4"/>
<dbReference type="PaxDb" id="3702-AT1G07615.1"/>
<dbReference type="ProteomicsDB" id="250855"/>
<dbReference type="EnsemblPlants" id="AT1G07615.1">
    <property type="protein sequence ID" value="AT1G07615.1"/>
    <property type="gene ID" value="AT1G07615"/>
</dbReference>
<dbReference type="GeneID" id="5007670"/>
<dbReference type="Gramene" id="AT1G07615.1">
    <property type="protein sequence ID" value="AT1G07615.1"/>
    <property type="gene ID" value="AT1G07615"/>
</dbReference>
<dbReference type="KEGG" id="ath:AT1G07615"/>
<dbReference type="Araport" id="AT1G07615"/>
<dbReference type="TAIR" id="AT1G07615">
    <property type="gene designation" value="OBG A-1"/>
</dbReference>
<dbReference type="eggNOG" id="KOG1489">
    <property type="taxonomic scope" value="Eukaryota"/>
</dbReference>
<dbReference type="HOGENOM" id="CLU_011747_5_2_1"/>
<dbReference type="InParanoid" id="F4HSD4"/>
<dbReference type="OMA" id="PRVGHWE"/>
<dbReference type="PRO" id="PR:F4HSD4"/>
<dbReference type="Proteomes" id="UP000006548">
    <property type="component" value="Chromosome 1"/>
</dbReference>
<dbReference type="ExpressionAtlas" id="F4HSD4">
    <property type="expression patterns" value="baseline and differential"/>
</dbReference>
<dbReference type="GO" id="GO:0005739">
    <property type="term" value="C:mitochondrion"/>
    <property type="evidence" value="ECO:0007669"/>
    <property type="project" value="UniProtKB-SubCell"/>
</dbReference>
<dbReference type="GO" id="GO:0005525">
    <property type="term" value="F:GTP binding"/>
    <property type="evidence" value="ECO:0007669"/>
    <property type="project" value="UniProtKB-KW"/>
</dbReference>
<dbReference type="GO" id="GO:0003924">
    <property type="term" value="F:GTPase activity"/>
    <property type="evidence" value="ECO:0007669"/>
    <property type="project" value="InterPro"/>
</dbReference>
<dbReference type="GO" id="GO:0000287">
    <property type="term" value="F:magnesium ion binding"/>
    <property type="evidence" value="ECO:0007669"/>
    <property type="project" value="InterPro"/>
</dbReference>
<dbReference type="CDD" id="cd01898">
    <property type="entry name" value="Obg"/>
    <property type="match status" value="1"/>
</dbReference>
<dbReference type="Gene3D" id="2.70.210.12">
    <property type="entry name" value="GTP1/OBG domain"/>
    <property type="match status" value="1"/>
</dbReference>
<dbReference type="Gene3D" id="3.40.50.300">
    <property type="entry name" value="P-loop containing nucleotide triphosphate hydrolases"/>
    <property type="match status" value="1"/>
</dbReference>
<dbReference type="InterPro" id="IPR031167">
    <property type="entry name" value="G_OBG"/>
</dbReference>
<dbReference type="InterPro" id="IPR006073">
    <property type="entry name" value="GTP-bd"/>
</dbReference>
<dbReference type="InterPro" id="IPR014100">
    <property type="entry name" value="GTP-bd_Obg/CgtA"/>
</dbReference>
<dbReference type="InterPro" id="IPR006169">
    <property type="entry name" value="GTP1_OBG_dom"/>
</dbReference>
<dbReference type="InterPro" id="IPR036726">
    <property type="entry name" value="GTP1_OBG_dom_sf"/>
</dbReference>
<dbReference type="InterPro" id="IPR045086">
    <property type="entry name" value="OBG_GTPase"/>
</dbReference>
<dbReference type="InterPro" id="IPR027417">
    <property type="entry name" value="P-loop_NTPase"/>
</dbReference>
<dbReference type="PANTHER" id="PTHR11702">
    <property type="entry name" value="DEVELOPMENTALLY REGULATED GTP-BINDING PROTEIN-RELATED"/>
    <property type="match status" value="1"/>
</dbReference>
<dbReference type="PANTHER" id="PTHR11702:SF31">
    <property type="entry name" value="MITOCHONDRIAL RIBOSOME-ASSOCIATED GTPASE 2"/>
    <property type="match status" value="1"/>
</dbReference>
<dbReference type="Pfam" id="PF01018">
    <property type="entry name" value="GTP1_OBG"/>
    <property type="match status" value="1"/>
</dbReference>
<dbReference type="Pfam" id="PF01926">
    <property type="entry name" value="MMR_HSR1"/>
    <property type="match status" value="1"/>
</dbReference>
<dbReference type="PIRSF" id="PIRSF002401">
    <property type="entry name" value="GTP_bd_Obg/CgtA"/>
    <property type="match status" value="1"/>
</dbReference>
<dbReference type="PRINTS" id="PR00326">
    <property type="entry name" value="GTP1OBG"/>
</dbReference>
<dbReference type="SUPFAM" id="SSF82051">
    <property type="entry name" value="Obg GTP-binding protein N-terminal domain"/>
    <property type="match status" value="1"/>
</dbReference>
<dbReference type="SUPFAM" id="SSF52540">
    <property type="entry name" value="P-loop containing nucleoside triphosphate hydrolases"/>
    <property type="match status" value="1"/>
</dbReference>
<dbReference type="PROSITE" id="PS51710">
    <property type="entry name" value="G_OBG"/>
    <property type="match status" value="1"/>
</dbReference>
<dbReference type="PROSITE" id="PS51883">
    <property type="entry name" value="OBG"/>
    <property type="match status" value="1"/>
</dbReference>
<evidence type="ECO:0000250" key="1"/>
<evidence type="ECO:0000255" key="2"/>
<evidence type="ECO:0000255" key="3">
    <source>
        <dbReference type="PROSITE-ProRule" id="PRU01047"/>
    </source>
</evidence>
<evidence type="ECO:0000255" key="4">
    <source>
        <dbReference type="PROSITE-ProRule" id="PRU01231"/>
    </source>
</evidence>
<evidence type="ECO:0000256" key="5">
    <source>
        <dbReference type="SAM" id="MobiDB-lite"/>
    </source>
</evidence>
<evidence type="ECO:0000305" key="6"/>